<comment type="mass spectrometry" mass="1966.48" method="MALDI" evidence="1"/>
<feature type="peptide" id="PRO_0000044205" description="Peptide hormone 4">
    <location>
        <begin position="1"/>
        <end position="17"/>
    </location>
</feature>
<feature type="modified residue" description="Serine amide" evidence="1">
    <location>
        <position position="17"/>
    </location>
</feature>
<reference key="1">
    <citation type="journal article" date="1999" name="Ann. N. Y. Acad. Sci.">
        <title>The unique neuropeptide pattern in abdominal perisympathetic organs of insects.</title>
        <authorList>
            <person name="Predel R."/>
            <person name="Eckert M."/>
            <person name="Holman G.M."/>
        </authorList>
    </citation>
    <scope>PROTEIN SEQUENCE</scope>
    <scope>AMIDATION AT SER-17</scope>
    <scope>MASS SPECTROMETRY</scope>
    <source>
        <tissue>Abdominal perisympathetic organs</tissue>
    </source>
</reference>
<keyword id="KW-0027">Amidation</keyword>
<keyword id="KW-0903">Direct protein sequencing</keyword>
<keyword id="KW-0527">Neuropeptide</keyword>
<sequence length="17" mass="1968">TDPLWQLPGAHLEQYLS</sequence>
<name>PH4_PERAM</name>
<proteinExistence type="evidence at protein level"/>
<organism>
    <name type="scientific">Periplaneta americana</name>
    <name type="common">American cockroach</name>
    <name type="synonym">Blatta americana</name>
    <dbReference type="NCBI Taxonomy" id="6978"/>
    <lineage>
        <taxon>Eukaryota</taxon>
        <taxon>Metazoa</taxon>
        <taxon>Ecdysozoa</taxon>
        <taxon>Arthropoda</taxon>
        <taxon>Hexapoda</taxon>
        <taxon>Insecta</taxon>
        <taxon>Pterygota</taxon>
        <taxon>Neoptera</taxon>
        <taxon>Polyneoptera</taxon>
        <taxon>Dictyoptera</taxon>
        <taxon>Blattodea</taxon>
        <taxon>Blattoidea</taxon>
        <taxon>Blattidae</taxon>
        <taxon>Blattinae</taxon>
        <taxon>Periplaneta</taxon>
    </lineage>
</organism>
<evidence type="ECO:0000269" key="1">
    <source>
    </source>
</evidence>
<protein>
    <recommendedName>
        <fullName>Peptide hormone 4</fullName>
    </recommendedName>
    <alternativeName>
        <fullName>Pea-YLS-amide</fullName>
    </alternativeName>
</protein>
<dbReference type="GO" id="GO:0007218">
    <property type="term" value="P:neuropeptide signaling pathway"/>
    <property type="evidence" value="ECO:0007669"/>
    <property type="project" value="UniProtKB-KW"/>
</dbReference>
<accession>P82697</accession>